<organism>
    <name type="scientific">Schizosaccharomyces pombe (strain 972 / ATCC 24843)</name>
    <name type="common">Fission yeast</name>
    <dbReference type="NCBI Taxonomy" id="284812"/>
    <lineage>
        <taxon>Eukaryota</taxon>
        <taxon>Fungi</taxon>
        <taxon>Dikarya</taxon>
        <taxon>Ascomycota</taxon>
        <taxon>Taphrinomycotina</taxon>
        <taxon>Schizosaccharomycetes</taxon>
        <taxon>Schizosaccharomycetales</taxon>
        <taxon>Schizosaccharomycetaceae</taxon>
        <taxon>Schizosaccharomyces</taxon>
    </lineage>
</organism>
<name>RM27_SCHPO</name>
<accession>Q5WRL1</accession>
<feature type="transit peptide" description="Mitochondrion">
    <location>
        <begin position="1"/>
        <end position="13"/>
    </location>
</feature>
<feature type="chain" id="PRO_0000343157" description="Large ribosomal subunit protein mL41">
    <location>
        <begin position="14"/>
        <end position="93"/>
    </location>
</feature>
<reference key="1">
    <citation type="journal article" date="2002" name="Nature">
        <title>The genome sequence of Schizosaccharomyces pombe.</title>
        <authorList>
            <person name="Wood V."/>
            <person name="Gwilliam R."/>
            <person name="Rajandream M.A."/>
            <person name="Lyne M.H."/>
            <person name="Lyne R."/>
            <person name="Stewart A."/>
            <person name="Sgouros J.G."/>
            <person name="Peat N."/>
            <person name="Hayles J."/>
            <person name="Baker S.G."/>
            <person name="Basham D."/>
            <person name="Bowman S."/>
            <person name="Brooks K."/>
            <person name="Brown D."/>
            <person name="Brown S."/>
            <person name="Chillingworth T."/>
            <person name="Churcher C.M."/>
            <person name="Collins M."/>
            <person name="Connor R."/>
            <person name="Cronin A."/>
            <person name="Davis P."/>
            <person name="Feltwell T."/>
            <person name="Fraser A."/>
            <person name="Gentles S."/>
            <person name="Goble A."/>
            <person name="Hamlin N."/>
            <person name="Harris D.E."/>
            <person name="Hidalgo J."/>
            <person name="Hodgson G."/>
            <person name="Holroyd S."/>
            <person name="Hornsby T."/>
            <person name="Howarth S."/>
            <person name="Huckle E.J."/>
            <person name="Hunt S."/>
            <person name="Jagels K."/>
            <person name="James K.D."/>
            <person name="Jones L."/>
            <person name="Jones M."/>
            <person name="Leather S."/>
            <person name="McDonald S."/>
            <person name="McLean J."/>
            <person name="Mooney P."/>
            <person name="Moule S."/>
            <person name="Mungall K.L."/>
            <person name="Murphy L.D."/>
            <person name="Niblett D."/>
            <person name="Odell C."/>
            <person name="Oliver K."/>
            <person name="O'Neil S."/>
            <person name="Pearson D."/>
            <person name="Quail M.A."/>
            <person name="Rabbinowitsch E."/>
            <person name="Rutherford K.M."/>
            <person name="Rutter S."/>
            <person name="Saunders D."/>
            <person name="Seeger K."/>
            <person name="Sharp S."/>
            <person name="Skelton J."/>
            <person name="Simmonds M.N."/>
            <person name="Squares R."/>
            <person name="Squares S."/>
            <person name="Stevens K."/>
            <person name="Taylor K."/>
            <person name="Taylor R.G."/>
            <person name="Tivey A."/>
            <person name="Walsh S.V."/>
            <person name="Warren T."/>
            <person name="Whitehead S."/>
            <person name="Woodward J.R."/>
            <person name="Volckaert G."/>
            <person name="Aert R."/>
            <person name="Robben J."/>
            <person name="Grymonprez B."/>
            <person name="Weltjens I."/>
            <person name="Vanstreels E."/>
            <person name="Rieger M."/>
            <person name="Schaefer M."/>
            <person name="Mueller-Auer S."/>
            <person name="Gabel C."/>
            <person name="Fuchs M."/>
            <person name="Duesterhoeft A."/>
            <person name="Fritzc C."/>
            <person name="Holzer E."/>
            <person name="Moestl D."/>
            <person name="Hilbert H."/>
            <person name="Borzym K."/>
            <person name="Langer I."/>
            <person name="Beck A."/>
            <person name="Lehrach H."/>
            <person name="Reinhardt R."/>
            <person name="Pohl T.M."/>
            <person name="Eger P."/>
            <person name="Zimmermann W."/>
            <person name="Wedler H."/>
            <person name="Wambutt R."/>
            <person name="Purnelle B."/>
            <person name="Goffeau A."/>
            <person name="Cadieu E."/>
            <person name="Dreano S."/>
            <person name="Gloux S."/>
            <person name="Lelaure V."/>
            <person name="Mottier S."/>
            <person name="Galibert F."/>
            <person name="Aves S.J."/>
            <person name="Xiang Z."/>
            <person name="Hunt C."/>
            <person name="Moore K."/>
            <person name="Hurst S.M."/>
            <person name="Lucas M."/>
            <person name="Rochet M."/>
            <person name="Gaillardin C."/>
            <person name="Tallada V.A."/>
            <person name="Garzon A."/>
            <person name="Thode G."/>
            <person name="Daga R.R."/>
            <person name="Cruzado L."/>
            <person name="Jimenez J."/>
            <person name="Sanchez M."/>
            <person name="del Rey F."/>
            <person name="Benito J."/>
            <person name="Dominguez A."/>
            <person name="Revuelta J.L."/>
            <person name="Moreno S."/>
            <person name="Armstrong J."/>
            <person name="Forsburg S.L."/>
            <person name="Cerutti L."/>
            <person name="Lowe T."/>
            <person name="McCombie W.R."/>
            <person name="Paulsen I."/>
            <person name="Potashkin J."/>
            <person name="Shpakovski G.V."/>
            <person name="Ussery D."/>
            <person name="Barrell B.G."/>
            <person name="Nurse P."/>
        </authorList>
    </citation>
    <scope>NUCLEOTIDE SEQUENCE [LARGE SCALE GENOMIC DNA]</scope>
    <source>
        <strain>972 / ATCC 24843</strain>
    </source>
</reference>
<keyword id="KW-0496">Mitochondrion</keyword>
<keyword id="KW-1185">Reference proteome</keyword>
<keyword id="KW-0687">Ribonucleoprotein</keyword>
<keyword id="KW-0689">Ribosomal protein</keyword>
<keyword id="KW-0809">Transit peptide</keyword>
<evidence type="ECO:0000250" key="1">
    <source>
        <dbReference type="UniProtKB" id="P36526"/>
    </source>
</evidence>
<evidence type="ECO:0000305" key="2"/>
<comment type="function">
    <text evidence="1">Component of the mitochondrial ribosome (mitoribosome), a dedicated translation machinery responsible for the synthesis of mitochondrial genome-encoded proteins, including at least some of the essential transmembrane subunits of the mitochondrial respiratory chain. The mitoribosomes are attached to the mitochondrial inner membrane and translation products are cotranslationally integrated into the membrane.</text>
</comment>
<comment type="subunit">
    <text evidence="1">Component of the mitochondrial large ribosomal subunit (mt-LSU). Mature yeast 74S mitochondrial ribosomes consist of a small (37S) and a large (54S) subunit. The 37S small subunit contains a 15S ribosomal RNA (15S mt-rRNA) and at least 32 different proteins. The 54S large subunit contains a 21S rRNA (21S mt-rRNA) and at least 45 different proteins.</text>
</comment>
<comment type="subcellular location">
    <subcellularLocation>
        <location evidence="1">Mitochondrion</location>
    </subcellularLocation>
</comment>
<comment type="similarity">
    <text evidence="2">Belongs to the mitochondrion-specific ribosomal protein mL41 family.</text>
</comment>
<dbReference type="EMBL" id="CU329670">
    <property type="protein sequence ID" value="CAH56514.1"/>
    <property type="molecule type" value="Genomic_DNA"/>
</dbReference>
<dbReference type="RefSeq" id="NP_001018233.1">
    <property type="nucleotide sequence ID" value="NM_001018764.2"/>
</dbReference>
<dbReference type="SMR" id="Q5WRL1"/>
<dbReference type="BioGRID" id="280623">
    <property type="interactions" value="1"/>
</dbReference>
<dbReference type="ComplexPortal" id="CPX-10323">
    <property type="entry name" value="54S mitochondrial large ribosomal subunit"/>
</dbReference>
<dbReference type="FunCoup" id="Q5WRL1">
    <property type="interactions" value="59"/>
</dbReference>
<dbReference type="STRING" id="284812.Q5WRL1"/>
<dbReference type="iPTMnet" id="Q5WRL1"/>
<dbReference type="PaxDb" id="4896-SPAC3A12.19.1"/>
<dbReference type="EnsemblFungi" id="SPAC3A12.19.1">
    <property type="protein sequence ID" value="SPAC3A12.19.1:pep"/>
    <property type="gene ID" value="SPAC3A12.19"/>
</dbReference>
<dbReference type="GeneID" id="3361547"/>
<dbReference type="KEGG" id="spo:3361547"/>
<dbReference type="PomBase" id="SPAC3A12.19">
    <property type="gene designation" value="mrpl27"/>
</dbReference>
<dbReference type="VEuPathDB" id="FungiDB:SPAC3A12.19"/>
<dbReference type="eggNOG" id="KOG4756">
    <property type="taxonomic scope" value="Eukaryota"/>
</dbReference>
<dbReference type="HOGENOM" id="CLU_131055_3_0_1"/>
<dbReference type="InParanoid" id="Q5WRL1"/>
<dbReference type="OMA" id="YIIEWDK"/>
<dbReference type="PhylomeDB" id="Q5WRL1"/>
<dbReference type="PRO" id="PR:Q5WRL1"/>
<dbReference type="Proteomes" id="UP000002485">
    <property type="component" value="Chromosome I"/>
</dbReference>
<dbReference type="GO" id="GO:0005762">
    <property type="term" value="C:mitochondrial large ribosomal subunit"/>
    <property type="evidence" value="ECO:0000318"/>
    <property type="project" value="GO_Central"/>
</dbReference>
<dbReference type="GO" id="GO:0003735">
    <property type="term" value="F:structural constituent of ribosome"/>
    <property type="evidence" value="ECO:0000318"/>
    <property type="project" value="GO_Central"/>
</dbReference>
<dbReference type="GO" id="GO:0032543">
    <property type="term" value="P:mitochondrial translation"/>
    <property type="evidence" value="ECO:0000266"/>
    <property type="project" value="PomBase"/>
</dbReference>
<dbReference type="GO" id="GO:0006412">
    <property type="term" value="P:translation"/>
    <property type="evidence" value="ECO:0000318"/>
    <property type="project" value="GO_Central"/>
</dbReference>
<dbReference type="InterPro" id="IPR019189">
    <property type="entry name" value="Ribosomal_mL41"/>
</dbReference>
<dbReference type="PANTHER" id="PTHR21338:SF0">
    <property type="entry name" value="LARGE RIBOSOMAL SUBUNIT PROTEIN ML41"/>
    <property type="match status" value="1"/>
</dbReference>
<dbReference type="PANTHER" id="PTHR21338">
    <property type="entry name" value="MITOCHONDRIAL RIBOSOMAL PROTEIN L41"/>
    <property type="match status" value="1"/>
</dbReference>
<dbReference type="Pfam" id="PF09809">
    <property type="entry name" value="MRP-L27"/>
    <property type="match status" value="1"/>
</dbReference>
<sequence>MHQSLLCFGARRLPMTTKLGHQYYKGTRTGKMGQKTRHGGFLVQWSRVRTFVPPSGDCELLPFVSRRIQATKGTYPEGANGLDGAVYFDLAHS</sequence>
<gene>
    <name type="primary">mrpl27</name>
    <name type="ORF">SPAC3A12.19</name>
</gene>
<proteinExistence type="inferred from homology"/>
<protein>
    <recommendedName>
        <fullName evidence="2">Large ribosomal subunit protein mL41</fullName>
    </recommendedName>
    <alternativeName>
        <fullName>54S ribosomal protein L27, mitochondrial</fullName>
    </alternativeName>
</protein>